<accession>Q5WX68</accession>
<reference key="1">
    <citation type="journal article" date="2004" name="Nat. Genet.">
        <title>Evidence in the Legionella pneumophila genome for exploitation of host cell functions and high genome plasticity.</title>
        <authorList>
            <person name="Cazalet C."/>
            <person name="Rusniok C."/>
            <person name="Brueggemann H."/>
            <person name="Zidane N."/>
            <person name="Magnier A."/>
            <person name="Ma L."/>
            <person name="Tichit M."/>
            <person name="Jarraud S."/>
            <person name="Bouchier C."/>
            <person name="Vandenesch F."/>
            <person name="Kunst F."/>
            <person name="Etienne J."/>
            <person name="Glaser P."/>
            <person name="Buchrieser C."/>
        </authorList>
    </citation>
    <scope>NUCLEOTIDE SEQUENCE [LARGE SCALE GENOMIC DNA]</scope>
    <source>
        <strain>Lens</strain>
    </source>
</reference>
<gene>
    <name evidence="1" type="primary">flgH</name>
    <name type="ordered locus">lpl1230</name>
</gene>
<keyword id="KW-0975">Bacterial flagellum</keyword>
<keyword id="KW-0998">Cell outer membrane</keyword>
<keyword id="KW-0449">Lipoprotein</keyword>
<keyword id="KW-0472">Membrane</keyword>
<keyword id="KW-0564">Palmitate</keyword>
<keyword id="KW-0732">Signal</keyword>
<sequence>MNRLNIAVSCLATALLFGCEALHPPAPGDNPDYAPTYPVTPDPKELRKVSGAIYSSETALPLFETPRARHPGDILTVFLIEKTDAQKNATTTQRKNDTTKITNKLFLGRPISLGSGYSMDFDLDNQRQFNGEGRSIQNNKLAGSISVTVAKVLANGNMVVQGEKWVRINQGNEFVRLSGIVRPQDIKADNTITSDRIANARISYGGTGQINNTNAQGWLSRILWGPLFPT</sequence>
<comment type="function">
    <text evidence="1">Assembles around the rod to form the L-ring and probably protects the motor/basal body from shearing forces during rotation.</text>
</comment>
<comment type="subunit">
    <text evidence="1">The basal body constitutes a major portion of the flagellar organelle and consists of four rings (L,P,S, and M) mounted on a central rod.</text>
</comment>
<comment type="subcellular location">
    <subcellularLocation>
        <location evidence="1">Cell outer membrane</location>
        <topology evidence="1">Lipid-anchor</topology>
    </subcellularLocation>
    <subcellularLocation>
        <location evidence="1">Bacterial flagellum basal body</location>
    </subcellularLocation>
</comment>
<comment type="similarity">
    <text evidence="1">Belongs to the FlgH family.</text>
</comment>
<feature type="signal peptide" evidence="1">
    <location>
        <begin position="1"/>
        <end position="18"/>
    </location>
</feature>
<feature type="chain" id="PRO_0000009455" description="Flagellar L-ring protein">
    <location>
        <begin position="19"/>
        <end position="230"/>
    </location>
</feature>
<feature type="lipid moiety-binding region" description="N-palmitoyl cysteine" evidence="1">
    <location>
        <position position="19"/>
    </location>
</feature>
<feature type="lipid moiety-binding region" description="S-diacylglycerol cysteine" evidence="1">
    <location>
        <position position="19"/>
    </location>
</feature>
<protein>
    <recommendedName>
        <fullName evidence="1">Flagellar L-ring protein</fullName>
    </recommendedName>
    <alternativeName>
        <fullName evidence="1">Basal body L-ring protein</fullName>
    </alternativeName>
</protein>
<dbReference type="EMBL" id="CR628337">
    <property type="protein sequence ID" value="CAH15469.1"/>
    <property type="molecule type" value="Genomic_DNA"/>
</dbReference>
<dbReference type="RefSeq" id="WP_011213580.1">
    <property type="nucleotide sequence ID" value="NC_006369.1"/>
</dbReference>
<dbReference type="SMR" id="Q5WX68"/>
<dbReference type="KEGG" id="lpf:lpl1230"/>
<dbReference type="LegioList" id="lpl1230"/>
<dbReference type="HOGENOM" id="CLU_069313_0_2_6"/>
<dbReference type="Proteomes" id="UP000002517">
    <property type="component" value="Chromosome"/>
</dbReference>
<dbReference type="GO" id="GO:0009427">
    <property type="term" value="C:bacterial-type flagellum basal body, distal rod, L ring"/>
    <property type="evidence" value="ECO:0007669"/>
    <property type="project" value="InterPro"/>
</dbReference>
<dbReference type="GO" id="GO:0009279">
    <property type="term" value="C:cell outer membrane"/>
    <property type="evidence" value="ECO:0007669"/>
    <property type="project" value="UniProtKB-SubCell"/>
</dbReference>
<dbReference type="GO" id="GO:0003774">
    <property type="term" value="F:cytoskeletal motor activity"/>
    <property type="evidence" value="ECO:0007669"/>
    <property type="project" value="InterPro"/>
</dbReference>
<dbReference type="GO" id="GO:0071973">
    <property type="term" value="P:bacterial-type flagellum-dependent cell motility"/>
    <property type="evidence" value="ECO:0007669"/>
    <property type="project" value="InterPro"/>
</dbReference>
<dbReference type="HAMAP" id="MF_00415">
    <property type="entry name" value="FlgH"/>
    <property type="match status" value="1"/>
</dbReference>
<dbReference type="InterPro" id="IPR000527">
    <property type="entry name" value="Flag_Lring"/>
</dbReference>
<dbReference type="NCBIfam" id="NF009341">
    <property type="entry name" value="PRK12701.1"/>
    <property type="match status" value="1"/>
</dbReference>
<dbReference type="PANTHER" id="PTHR34933">
    <property type="entry name" value="FLAGELLAR L-RING PROTEIN"/>
    <property type="match status" value="1"/>
</dbReference>
<dbReference type="PANTHER" id="PTHR34933:SF1">
    <property type="entry name" value="FLAGELLAR L-RING PROTEIN"/>
    <property type="match status" value="1"/>
</dbReference>
<dbReference type="Pfam" id="PF02107">
    <property type="entry name" value="FlgH"/>
    <property type="match status" value="1"/>
</dbReference>
<dbReference type="PRINTS" id="PR01008">
    <property type="entry name" value="FLGLRINGFLGH"/>
</dbReference>
<dbReference type="PROSITE" id="PS51257">
    <property type="entry name" value="PROKAR_LIPOPROTEIN"/>
    <property type="match status" value="1"/>
</dbReference>
<organism>
    <name type="scientific">Legionella pneumophila (strain Lens)</name>
    <dbReference type="NCBI Taxonomy" id="297245"/>
    <lineage>
        <taxon>Bacteria</taxon>
        <taxon>Pseudomonadati</taxon>
        <taxon>Pseudomonadota</taxon>
        <taxon>Gammaproteobacteria</taxon>
        <taxon>Legionellales</taxon>
        <taxon>Legionellaceae</taxon>
        <taxon>Legionella</taxon>
    </lineage>
</organism>
<evidence type="ECO:0000255" key="1">
    <source>
        <dbReference type="HAMAP-Rule" id="MF_00415"/>
    </source>
</evidence>
<name>FLGH_LEGPL</name>
<proteinExistence type="inferred from homology"/>